<proteinExistence type="inferred from homology"/>
<sequence length="367" mass="38380">MTASQRTLMVMAGGTGGHVFPGLAVAHRMEAAGWRVVWLGNPAGMEATLVPKHGIPMEYVRFGGLRGKGLKTKLTLPFNLLRACGQSLAALRRVRPDVVLGMGGYITFPAGVMTALSGRPLVLHEQNSIAGLTNKVLAKFAKRVLVAFPGALPHAEWTGNPIRAELAGTEAPKARYAARSGPLNVLVVGGSLGAAALNEVVPRALAMLTPGERPRIVHQAGAKHIEALKANYEAAGFAAGEDVRLVPFIDDMAAAYAAADLVICRSGAMTVSEIAAVGVAALFVPFPYAVDDHQTSNAAFLADAGAAVLVQQRDLSAELLADWLRGQSRASLADMAERSRSLAKPEATDEVARVCAKAAGANLETLQ</sequence>
<feature type="chain" id="PRO_0000225039" description="UDP-N-acetylglucosamine--N-acetylmuramyl-(pentapeptide) pyrophosphoryl-undecaprenol N-acetylglucosamine transferase">
    <location>
        <begin position="1"/>
        <end position="367"/>
    </location>
</feature>
<feature type="binding site" evidence="1">
    <location>
        <begin position="15"/>
        <end position="17"/>
    </location>
    <ligand>
        <name>UDP-N-acetyl-alpha-D-glucosamine</name>
        <dbReference type="ChEBI" id="CHEBI:57705"/>
    </ligand>
</feature>
<feature type="binding site" evidence="1">
    <location>
        <position position="127"/>
    </location>
    <ligand>
        <name>UDP-N-acetyl-alpha-D-glucosamine</name>
        <dbReference type="ChEBI" id="CHEBI:57705"/>
    </ligand>
</feature>
<feature type="binding site" evidence="1">
    <location>
        <position position="163"/>
    </location>
    <ligand>
        <name>UDP-N-acetyl-alpha-D-glucosamine</name>
        <dbReference type="ChEBI" id="CHEBI:57705"/>
    </ligand>
</feature>
<feature type="binding site" evidence="1">
    <location>
        <position position="191"/>
    </location>
    <ligand>
        <name>UDP-N-acetyl-alpha-D-glucosamine</name>
        <dbReference type="ChEBI" id="CHEBI:57705"/>
    </ligand>
</feature>
<feature type="binding site" evidence="1">
    <location>
        <position position="249"/>
    </location>
    <ligand>
        <name>UDP-N-acetyl-alpha-D-glucosamine</name>
        <dbReference type="ChEBI" id="CHEBI:57705"/>
    </ligand>
</feature>
<feature type="binding site" evidence="1">
    <location>
        <position position="294"/>
    </location>
    <ligand>
        <name>UDP-N-acetyl-alpha-D-glucosamine</name>
        <dbReference type="ChEBI" id="CHEBI:57705"/>
    </ligand>
</feature>
<name>MURG_BURL3</name>
<organism>
    <name type="scientific">Burkholderia lata (strain ATCC 17760 / DSM 23089 / LMG 22485 / NCIMB 9086 / R18194 / 383)</name>
    <dbReference type="NCBI Taxonomy" id="482957"/>
    <lineage>
        <taxon>Bacteria</taxon>
        <taxon>Pseudomonadati</taxon>
        <taxon>Pseudomonadota</taxon>
        <taxon>Betaproteobacteria</taxon>
        <taxon>Burkholderiales</taxon>
        <taxon>Burkholderiaceae</taxon>
        <taxon>Burkholderia</taxon>
        <taxon>Burkholderia cepacia complex</taxon>
    </lineage>
</organism>
<accession>Q39JX0</accession>
<dbReference type="EC" id="2.4.1.227" evidence="1"/>
<dbReference type="EMBL" id="CP000151">
    <property type="protein sequence ID" value="ABB07246.1"/>
    <property type="molecule type" value="Genomic_DNA"/>
</dbReference>
<dbReference type="RefSeq" id="WP_011350839.1">
    <property type="nucleotide sequence ID" value="NC_007510.1"/>
</dbReference>
<dbReference type="SMR" id="Q39JX0"/>
<dbReference type="CAZy" id="GT28">
    <property type="family name" value="Glycosyltransferase Family 28"/>
</dbReference>
<dbReference type="GeneID" id="45093559"/>
<dbReference type="KEGG" id="bur:Bcep18194_A3645"/>
<dbReference type="PATRIC" id="fig|482957.22.peg.499"/>
<dbReference type="HOGENOM" id="CLU_037404_2_0_4"/>
<dbReference type="UniPathway" id="UPA00219"/>
<dbReference type="Proteomes" id="UP000002705">
    <property type="component" value="Chromosome 1"/>
</dbReference>
<dbReference type="GO" id="GO:0005886">
    <property type="term" value="C:plasma membrane"/>
    <property type="evidence" value="ECO:0007669"/>
    <property type="project" value="UniProtKB-SubCell"/>
</dbReference>
<dbReference type="GO" id="GO:0051991">
    <property type="term" value="F:UDP-N-acetyl-D-glucosamine:N-acetylmuramoyl-L-alanyl-D-glutamyl-meso-2,6-diaminopimelyl-D-alanyl-D-alanine-diphosphoundecaprenol 4-beta-N-acetylglucosaminlytransferase activity"/>
    <property type="evidence" value="ECO:0007669"/>
    <property type="project" value="RHEA"/>
</dbReference>
<dbReference type="GO" id="GO:0050511">
    <property type="term" value="F:undecaprenyldiphospho-muramoylpentapeptide beta-N-acetylglucosaminyltransferase activity"/>
    <property type="evidence" value="ECO:0007669"/>
    <property type="project" value="UniProtKB-UniRule"/>
</dbReference>
<dbReference type="GO" id="GO:0005975">
    <property type="term" value="P:carbohydrate metabolic process"/>
    <property type="evidence" value="ECO:0007669"/>
    <property type="project" value="InterPro"/>
</dbReference>
<dbReference type="GO" id="GO:0051301">
    <property type="term" value="P:cell division"/>
    <property type="evidence" value="ECO:0007669"/>
    <property type="project" value="UniProtKB-KW"/>
</dbReference>
<dbReference type="GO" id="GO:0071555">
    <property type="term" value="P:cell wall organization"/>
    <property type="evidence" value="ECO:0007669"/>
    <property type="project" value="UniProtKB-KW"/>
</dbReference>
<dbReference type="GO" id="GO:0030259">
    <property type="term" value="P:lipid glycosylation"/>
    <property type="evidence" value="ECO:0007669"/>
    <property type="project" value="UniProtKB-UniRule"/>
</dbReference>
<dbReference type="GO" id="GO:0009252">
    <property type="term" value="P:peptidoglycan biosynthetic process"/>
    <property type="evidence" value="ECO:0007669"/>
    <property type="project" value="UniProtKB-UniRule"/>
</dbReference>
<dbReference type="GO" id="GO:0008360">
    <property type="term" value="P:regulation of cell shape"/>
    <property type="evidence" value="ECO:0007669"/>
    <property type="project" value="UniProtKB-KW"/>
</dbReference>
<dbReference type="CDD" id="cd03785">
    <property type="entry name" value="GT28_MurG"/>
    <property type="match status" value="1"/>
</dbReference>
<dbReference type="Gene3D" id="3.40.50.2000">
    <property type="entry name" value="Glycogen Phosphorylase B"/>
    <property type="match status" value="2"/>
</dbReference>
<dbReference type="HAMAP" id="MF_00033">
    <property type="entry name" value="MurG"/>
    <property type="match status" value="1"/>
</dbReference>
<dbReference type="InterPro" id="IPR006009">
    <property type="entry name" value="GlcNAc_MurG"/>
</dbReference>
<dbReference type="InterPro" id="IPR007235">
    <property type="entry name" value="Glyco_trans_28_C"/>
</dbReference>
<dbReference type="InterPro" id="IPR004276">
    <property type="entry name" value="GlycoTrans_28_N"/>
</dbReference>
<dbReference type="NCBIfam" id="TIGR01133">
    <property type="entry name" value="murG"/>
    <property type="match status" value="1"/>
</dbReference>
<dbReference type="PANTHER" id="PTHR21015:SF22">
    <property type="entry name" value="GLYCOSYLTRANSFERASE"/>
    <property type="match status" value="1"/>
</dbReference>
<dbReference type="PANTHER" id="PTHR21015">
    <property type="entry name" value="UDP-N-ACETYLGLUCOSAMINE--N-ACETYLMURAMYL-(PENTAPEPTIDE) PYROPHOSPHORYL-UNDECAPRENOL N-ACETYLGLUCOSAMINE TRANSFERASE 1"/>
    <property type="match status" value="1"/>
</dbReference>
<dbReference type="Pfam" id="PF04101">
    <property type="entry name" value="Glyco_tran_28_C"/>
    <property type="match status" value="1"/>
</dbReference>
<dbReference type="Pfam" id="PF03033">
    <property type="entry name" value="Glyco_transf_28"/>
    <property type="match status" value="1"/>
</dbReference>
<dbReference type="SUPFAM" id="SSF53756">
    <property type="entry name" value="UDP-Glycosyltransferase/glycogen phosphorylase"/>
    <property type="match status" value="1"/>
</dbReference>
<keyword id="KW-0131">Cell cycle</keyword>
<keyword id="KW-0132">Cell division</keyword>
<keyword id="KW-0997">Cell inner membrane</keyword>
<keyword id="KW-1003">Cell membrane</keyword>
<keyword id="KW-0133">Cell shape</keyword>
<keyword id="KW-0961">Cell wall biogenesis/degradation</keyword>
<keyword id="KW-0328">Glycosyltransferase</keyword>
<keyword id="KW-0472">Membrane</keyword>
<keyword id="KW-0573">Peptidoglycan synthesis</keyword>
<keyword id="KW-0808">Transferase</keyword>
<evidence type="ECO:0000255" key="1">
    <source>
        <dbReference type="HAMAP-Rule" id="MF_00033"/>
    </source>
</evidence>
<reference key="1">
    <citation type="submission" date="2005-10" db="EMBL/GenBank/DDBJ databases">
        <title>Complete sequence of chromosome 1 of Burkholderia sp. 383.</title>
        <authorList>
            <consortium name="US DOE Joint Genome Institute"/>
            <person name="Copeland A."/>
            <person name="Lucas S."/>
            <person name="Lapidus A."/>
            <person name="Barry K."/>
            <person name="Detter J.C."/>
            <person name="Glavina T."/>
            <person name="Hammon N."/>
            <person name="Israni S."/>
            <person name="Pitluck S."/>
            <person name="Chain P."/>
            <person name="Malfatti S."/>
            <person name="Shin M."/>
            <person name="Vergez L."/>
            <person name="Schmutz J."/>
            <person name="Larimer F."/>
            <person name="Land M."/>
            <person name="Kyrpides N."/>
            <person name="Lykidis A."/>
            <person name="Richardson P."/>
        </authorList>
    </citation>
    <scope>NUCLEOTIDE SEQUENCE [LARGE SCALE GENOMIC DNA]</scope>
    <source>
        <strain>ATCC 17760 / DSM 23089 / LMG 22485 / NCIMB 9086 / R18194 / 383</strain>
    </source>
</reference>
<gene>
    <name evidence="1" type="primary">murG</name>
    <name type="ordered locus">Bcep18194_A3645</name>
</gene>
<protein>
    <recommendedName>
        <fullName evidence="1">UDP-N-acetylglucosamine--N-acetylmuramyl-(pentapeptide) pyrophosphoryl-undecaprenol N-acetylglucosamine transferase</fullName>
        <ecNumber evidence="1">2.4.1.227</ecNumber>
    </recommendedName>
    <alternativeName>
        <fullName evidence="1">Undecaprenyl-PP-MurNAc-pentapeptide-UDPGlcNAc GlcNAc transferase</fullName>
    </alternativeName>
</protein>
<comment type="function">
    <text evidence="1">Cell wall formation. Catalyzes the transfer of a GlcNAc subunit on undecaprenyl-pyrophosphoryl-MurNAc-pentapeptide (lipid intermediate I) to form undecaprenyl-pyrophosphoryl-MurNAc-(pentapeptide)GlcNAc (lipid intermediate II).</text>
</comment>
<comment type="catalytic activity">
    <reaction evidence="1">
        <text>di-trans,octa-cis-undecaprenyl diphospho-N-acetyl-alpha-D-muramoyl-L-alanyl-D-glutamyl-meso-2,6-diaminopimeloyl-D-alanyl-D-alanine + UDP-N-acetyl-alpha-D-glucosamine = di-trans,octa-cis-undecaprenyl diphospho-[N-acetyl-alpha-D-glucosaminyl-(1-&gt;4)]-N-acetyl-alpha-D-muramoyl-L-alanyl-D-glutamyl-meso-2,6-diaminopimeloyl-D-alanyl-D-alanine + UDP + H(+)</text>
        <dbReference type="Rhea" id="RHEA:31227"/>
        <dbReference type="ChEBI" id="CHEBI:15378"/>
        <dbReference type="ChEBI" id="CHEBI:57705"/>
        <dbReference type="ChEBI" id="CHEBI:58223"/>
        <dbReference type="ChEBI" id="CHEBI:61387"/>
        <dbReference type="ChEBI" id="CHEBI:61388"/>
        <dbReference type="EC" id="2.4.1.227"/>
    </reaction>
</comment>
<comment type="pathway">
    <text evidence="1">Cell wall biogenesis; peptidoglycan biosynthesis.</text>
</comment>
<comment type="subcellular location">
    <subcellularLocation>
        <location evidence="1">Cell inner membrane</location>
        <topology evidence="1">Peripheral membrane protein</topology>
        <orientation evidence="1">Cytoplasmic side</orientation>
    </subcellularLocation>
</comment>
<comment type="similarity">
    <text evidence="1">Belongs to the glycosyltransferase 28 family. MurG subfamily.</text>
</comment>